<comment type="catalytic activity">
    <reaction>
        <text>(2R)-2-phosphoglycerate = phosphoenolpyruvate + H2O</text>
        <dbReference type="Rhea" id="RHEA:10164"/>
        <dbReference type="ChEBI" id="CHEBI:15377"/>
        <dbReference type="ChEBI" id="CHEBI:58289"/>
        <dbReference type="ChEBI" id="CHEBI:58702"/>
        <dbReference type="EC" id="4.2.1.11"/>
    </reaction>
</comment>
<comment type="cofactor">
    <cofactor evidence="1">
        <name>Mg(2+)</name>
        <dbReference type="ChEBI" id="CHEBI:18420"/>
    </cofactor>
    <text evidence="1">Mg(2+) is required for catalysis and for stabilizing the dimer.</text>
</comment>
<comment type="pathway">
    <text>Carbohydrate degradation; glycolysis; pyruvate from D-glyceraldehyde 3-phosphate: step 4/5.</text>
</comment>
<comment type="subunit">
    <text evidence="1">Homodimer.</text>
</comment>
<comment type="subcellular location">
    <subcellularLocation>
        <location>Cytoplasm</location>
    </subcellularLocation>
</comment>
<comment type="similarity">
    <text evidence="2">Belongs to the enolase family.</text>
</comment>
<proteinExistence type="evidence at transcript level"/>
<sequence>MVIKKVHSRQIFDSRGNPTVEVDLWTDKGMFRAAVPSGASTGIYEALEMRDKDAKNYHGKTLFNAVGNVNKIIAPALVDKKMDEKDQTAVDNFLLALDGTENKNKLGANAILGVSLAVCKAGAAAKGVPLYRHIADLAGNKEVILPVPAFNVINGGSHAGNKLAMQEFMILPTGAKNFTEAMKMGTEVYHHLKSVIKKKYGQDACNVGDEGGFAPNILDNKEGLELLKTAIANAGYTAEIEIGMDVAASEFCKEKKYDLDFKNPDSNPNDWLTSDQLADVYKDFVKNYPVVSIEDPFDQDDWEAYTKMTKDMDIQIVGDDLLVTNPKRVQKGIDLKAANALLLKVNQIGSVTESIQACKMSQDAGWGVMVSHRSGETEDTFIADLVVGLCTGQIKTGAPCRSERLAKYNQILRIEEELGDKAVFAGKKFRNPLK</sequence>
<reference key="1">
    <citation type="journal article" date="1995" name="Neurochem. Res.">
        <title>Characterization of squid enolase mRNA: sequence analysis, tissue distribution, and axonal localization.</title>
        <authorList>
            <person name="Chun J.T."/>
            <person name="Gioio A.E."/>
            <person name="Crispino M."/>
            <person name="Giuditta A."/>
            <person name="Kaplan B.B."/>
        </authorList>
    </citation>
    <scope>NUCLEOTIDE SEQUENCE [MRNA]</scope>
</reference>
<evidence type="ECO:0000250" key="1"/>
<evidence type="ECO:0000305" key="2"/>
<protein>
    <recommendedName>
        <fullName>Enolase</fullName>
        <ecNumber>4.2.1.11</ecNumber>
    </recommendedName>
    <alternativeName>
        <fullName>2-phospho-D-glycerate hydro-lyase</fullName>
    </alternativeName>
    <alternativeName>
        <fullName>2-phosphoglycerate dehydratase</fullName>
    </alternativeName>
</protein>
<organism>
    <name type="scientific">Doryteuthis pealeii</name>
    <name type="common">Longfin inshore squid</name>
    <name type="synonym">Loligo pealeii</name>
    <dbReference type="NCBI Taxonomy" id="1051067"/>
    <lineage>
        <taxon>Eukaryota</taxon>
        <taxon>Metazoa</taxon>
        <taxon>Spiralia</taxon>
        <taxon>Lophotrochozoa</taxon>
        <taxon>Mollusca</taxon>
        <taxon>Cephalopoda</taxon>
        <taxon>Coleoidea</taxon>
        <taxon>Decapodiformes</taxon>
        <taxon>Myopsida</taxon>
        <taxon>Loliginidae</taxon>
        <taxon>Doryteuthis</taxon>
    </lineage>
</organism>
<name>ENO_DORPE</name>
<accession>O02654</accession>
<dbReference type="EC" id="4.2.1.11"/>
<dbReference type="EMBL" id="S80961">
    <property type="protein sequence ID" value="AAB50731.1"/>
    <property type="molecule type" value="mRNA"/>
</dbReference>
<dbReference type="SMR" id="O02654"/>
<dbReference type="UniPathway" id="UPA00109">
    <property type="reaction ID" value="UER00187"/>
</dbReference>
<dbReference type="GO" id="GO:0000015">
    <property type="term" value="C:phosphopyruvate hydratase complex"/>
    <property type="evidence" value="ECO:0007669"/>
    <property type="project" value="InterPro"/>
</dbReference>
<dbReference type="GO" id="GO:0000287">
    <property type="term" value="F:magnesium ion binding"/>
    <property type="evidence" value="ECO:0007669"/>
    <property type="project" value="InterPro"/>
</dbReference>
<dbReference type="GO" id="GO:0004634">
    <property type="term" value="F:phosphopyruvate hydratase activity"/>
    <property type="evidence" value="ECO:0007669"/>
    <property type="project" value="UniProtKB-EC"/>
</dbReference>
<dbReference type="GO" id="GO:0006096">
    <property type="term" value="P:glycolytic process"/>
    <property type="evidence" value="ECO:0007669"/>
    <property type="project" value="UniProtKB-UniPathway"/>
</dbReference>
<dbReference type="CDD" id="cd03313">
    <property type="entry name" value="enolase"/>
    <property type="match status" value="1"/>
</dbReference>
<dbReference type="FunFam" id="3.30.390.10:FF:000001">
    <property type="entry name" value="Enolase"/>
    <property type="match status" value="1"/>
</dbReference>
<dbReference type="FunFam" id="3.20.20.120:FF:000002">
    <property type="entry name" value="Enolase 1"/>
    <property type="match status" value="1"/>
</dbReference>
<dbReference type="Gene3D" id="3.20.20.120">
    <property type="entry name" value="Enolase-like C-terminal domain"/>
    <property type="match status" value="1"/>
</dbReference>
<dbReference type="Gene3D" id="3.30.390.10">
    <property type="entry name" value="Enolase-like, N-terminal domain"/>
    <property type="match status" value="1"/>
</dbReference>
<dbReference type="HAMAP" id="MF_00318">
    <property type="entry name" value="Enolase"/>
    <property type="match status" value="1"/>
</dbReference>
<dbReference type="InterPro" id="IPR000941">
    <property type="entry name" value="Enolase"/>
</dbReference>
<dbReference type="InterPro" id="IPR036849">
    <property type="entry name" value="Enolase-like_C_sf"/>
</dbReference>
<dbReference type="InterPro" id="IPR029017">
    <property type="entry name" value="Enolase-like_N"/>
</dbReference>
<dbReference type="InterPro" id="IPR020810">
    <property type="entry name" value="Enolase_C"/>
</dbReference>
<dbReference type="InterPro" id="IPR020809">
    <property type="entry name" value="Enolase_CS"/>
</dbReference>
<dbReference type="InterPro" id="IPR020811">
    <property type="entry name" value="Enolase_N"/>
</dbReference>
<dbReference type="NCBIfam" id="TIGR01060">
    <property type="entry name" value="eno"/>
    <property type="match status" value="1"/>
</dbReference>
<dbReference type="PANTHER" id="PTHR11902">
    <property type="entry name" value="ENOLASE"/>
    <property type="match status" value="1"/>
</dbReference>
<dbReference type="PANTHER" id="PTHR11902:SF1">
    <property type="entry name" value="ENOLASE"/>
    <property type="match status" value="1"/>
</dbReference>
<dbReference type="Pfam" id="PF00113">
    <property type="entry name" value="Enolase_C"/>
    <property type="match status" value="1"/>
</dbReference>
<dbReference type="Pfam" id="PF03952">
    <property type="entry name" value="Enolase_N"/>
    <property type="match status" value="1"/>
</dbReference>
<dbReference type="PIRSF" id="PIRSF001400">
    <property type="entry name" value="Enolase"/>
    <property type="match status" value="1"/>
</dbReference>
<dbReference type="PRINTS" id="PR00148">
    <property type="entry name" value="ENOLASE"/>
</dbReference>
<dbReference type="SFLD" id="SFLDS00001">
    <property type="entry name" value="Enolase"/>
    <property type="match status" value="1"/>
</dbReference>
<dbReference type="SFLD" id="SFLDF00002">
    <property type="entry name" value="enolase"/>
    <property type="match status" value="1"/>
</dbReference>
<dbReference type="SMART" id="SM01192">
    <property type="entry name" value="Enolase_C"/>
    <property type="match status" value="1"/>
</dbReference>
<dbReference type="SMART" id="SM01193">
    <property type="entry name" value="Enolase_N"/>
    <property type="match status" value="1"/>
</dbReference>
<dbReference type="SUPFAM" id="SSF51604">
    <property type="entry name" value="Enolase C-terminal domain-like"/>
    <property type="match status" value="1"/>
</dbReference>
<dbReference type="SUPFAM" id="SSF54826">
    <property type="entry name" value="Enolase N-terminal domain-like"/>
    <property type="match status" value="1"/>
</dbReference>
<dbReference type="PROSITE" id="PS00164">
    <property type="entry name" value="ENOLASE"/>
    <property type="match status" value="1"/>
</dbReference>
<feature type="chain" id="PRO_0000134086" description="Enolase">
    <location>
        <begin position="1"/>
        <end position="434"/>
    </location>
</feature>
<feature type="active site" description="Proton donor" evidence="1">
    <location>
        <position position="210"/>
    </location>
</feature>
<feature type="active site" description="Proton acceptor" evidence="1">
    <location>
        <position position="344"/>
    </location>
</feature>
<feature type="binding site" evidence="1">
    <location>
        <position position="158"/>
    </location>
    <ligand>
        <name>substrate</name>
    </ligand>
</feature>
<feature type="binding site" evidence="1">
    <location>
        <position position="167"/>
    </location>
    <ligand>
        <name>substrate</name>
    </ligand>
</feature>
<feature type="binding site" evidence="1">
    <location>
        <position position="245"/>
    </location>
    <ligand>
        <name>Mg(2+)</name>
        <dbReference type="ChEBI" id="CHEBI:18420"/>
    </ligand>
</feature>
<feature type="binding site" evidence="1">
    <location>
        <position position="294"/>
    </location>
    <ligand>
        <name>Mg(2+)</name>
        <dbReference type="ChEBI" id="CHEBI:18420"/>
    </ligand>
</feature>
<feature type="binding site" evidence="1">
    <location>
        <position position="294"/>
    </location>
    <ligand>
        <name>substrate</name>
    </ligand>
</feature>
<feature type="binding site" evidence="1">
    <location>
        <position position="319"/>
    </location>
    <ligand>
        <name>Mg(2+)</name>
        <dbReference type="ChEBI" id="CHEBI:18420"/>
    </ligand>
</feature>
<feature type="binding site" evidence="1">
    <location>
        <position position="319"/>
    </location>
    <ligand>
        <name>substrate</name>
    </ligand>
</feature>
<feature type="binding site" evidence="1">
    <location>
        <begin position="371"/>
        <end position="374"/>
    </location>
    <ligand>
        <name>substrate</name>
    </ligand>
</feature>
<feature type="binding site" evidence="1">
    <location>
        <position position="395"/>
    </location>
    <ligand>
        <name>substrate</name>
    </ligand>
</feature>
<keyword id="KW-0963">Cytoplasm</keyword>
<keyword id="KW-0324">Glycolysis</keyword>
<keyword id="KW-0456">Lyase</keyword>
<keyword id="KW-0460">Magnesium</keyword>
<keyword id="KW-0479">Metal-binding</keyword>